<sequence length="427" mass="47255">MSVSFENKETNRGVLTFTISQDQIKPELDRVFKSVKKSLNVPGFRKGHLPRPIFDKKFGEESLYQDVMNALLPNAYEAAVKEAGLEVVAQPKIDVTSMEKGQDWVIAAEVVTKPEVKLGDYKNLEVSVDVEKEVTDADVEERIERERNNLAELVIKEAAAENGDTVVIDFVGSIDGVEFDGGKGENFSLGLGSGQFIPGFEDQLVGHSAGETVDVIVTFPEDYQAEDLAGKEAKFVTTIHEVKAKEVPALDDELAKDIDEEVETLADLKEKYRKELAAAKEEAYKDAVEGAAIDTAVENAEIVELPEEMIHEEVHRSVNEFLGNLQRQGINPDMYFQITGTTQEDLHNQYQAEAESRTKTNLVIEAVAKAEGFDASEEEIQKEVEQLAADYNMEVAQVQSLLSADMLKHDITIKKAVELITSTATVK</sequence>
<evidence type="ECO:0000255" key="1">
    <source>
        <dbReference type="HAMAP-Rule" id="MF_00303"/>
    </source>
</evidence>
<keyword id="KW-0131">Cell cycle</keyword>
<keyword id="KW-0132">Cell division</keyword>
<keyword id="KW-0143">Chaperone</keyword>
<keyword id="KW-0963">Cytoplasm</keyword>
<keyword id="KW-0413">Isomerase</keyword>
<keyword id="KW-0697">Rotamase</keyword>
<comment type="function">
    <text evidence="1">Involved in protein export. Acts as a chaperone by maintaining the newly synthesized protein in an open conformation. Functions as a peptidyl-prolyl cis-trans isomerase.</text>
</comment>
<comment type="catalytic activity">
    <reaction evidence="1">
        <text>[protein]-peptidylproline (omega=180) = [protein]-peptidylproline (omega=0)</text>
        <dbReference type="Rhea" id="RHEA:16237"/>
        <dbReference type="Rhea" id="RHEA-COMP:10747"/>
        <dbReference type="Rhea" id="RHEA-COMP:10748"/>
        <dbReference type="ChEBI" id="CHEBI:83833"/>
        <dbReference type="ChEBI" id="CHEBI:83834"/>
        <dbReference type="EC" id="5.2.1.8"/>
    </reaction>
</comment>
<comment type="subcellular location">
    <subcellularLocation>
        <location>Cytoplasm</location>
    </subcellularLocation>
    <text evidence="1">About half TF is bound to the ribosome near the polypeptide exit tunnel while the other half is free in the cytoplasm.</text>
</comment>
<comment type="domain">
    <text evidence="1">Consists of 3 domains; the N-terminus binds the ribosome, the middle domain has PPIase activity, while the C-terminus has intrinsic chaperone activity on its own.</text>
</comment>
<comment type="similarity">
    <text evidence="1">Belongs to the FKBP-type PPIase family. Tig subfamily.</text>
</comment>
<proteinExistence type="inferred from homology"/>
<dbReference type="EC" id="5.2.1.8" evidence="1"/>
<dbReference type="EMBL" id="FM211187">
    <property type="protein sequence ID" value="CAR68226.1"/>
    <property type="molecule type" value="Genomic_DNA"/>
</dbReference>
<dbReference type="RefSeq" id="WP_000116466.1">
    <property type="nucleotide sequence ID" value="NC_011900.1"/>
</dbReference>
<dbReference type="SMR" id="B8ZLG8"/>
<dbReference type="KEGG" id="sne:SPN23F03760"/>
<dbReference type="HOGENOM" id="CLU_033058_3_2_9"/>
<dbReference type="GO" id="GO:0005737">
    <property type="term" value="C:cytoplasm"/>
    <property type="evidence" value="ECO:0007669"/>
    <property type="project" value="UniProtKB-SubCell"/>
</dbReference>
<dbReference type="GO" id="GO:0003755">
    <property type="term" value="F:peptidyl-prolyl cis-trans isomerase activity"/>
    <property type="evidence" value="ECO:0007669"/>
    <property type="project" value="UniProtKB-UniRule"/>
</dbReference>
<dbReference type="GO" id="GO:0044183">
    <property type="term" value="F:protein folding chaperone"/>
    <property type="evidence" value="ECO:0007669"/>
    <property type="project" value="TreeGrafter"/>
</dbReference>
<dbReference type="GO" id="GO:0043022">
    <property type="term" value="F:ribosome binding"/>
    <property type="evidence" value="ECO:0007669"/>
    <property type="project" value="TreeGrafter"/>
</dbReference>
<dbReference type="GO" id="GO:0051083">
    <property type="term" value="P:'de novo' cotranslational protein folding"/>
    <property type="evidence" value="ECO:0007669"/>
    <property type="project" value="TreeGrafter"/>
</dbReference>
<dbReference type="GO" id="GO:0051301">
    <property type="term" value="P:cell division"/>
    <property type="evidence" value="ECO:0007669"/>
    <property type="project" value="UniProtKB-KW"/>
</dbReference>
<dbReference type="GO" id="GO:0061077">
    <property type="term" value="P:chaperone-mediated protein folding"/>
    <property type="evidence" value="ECO:0007669"/>
    <property type="project" value="TreeGrafter"/>
</dbReference>
<dbReference type="GO" id="GO:0015031">
    <property type="term" value="P:protein transport"/>
    <property type="evidence" value="ECO:0007669"/>
    <property type="project" value="UniProtKB-UniRule"/>
</dbReference>
<dbReference type="GO" id="GO:0043335">
    <property type="term" value="P:protein unfolding"/>
    <property type="evidence" value="ECO:0007669"/>
    <property type="project" value="TreeGrafter"/>
</dbReference>
<dbReference type="FunFam" id="3.10.50.40:FF:000001">
    <property type="entry name" value="Trigger factor"/>
    <property type="match status" value="1"/>
</dbReference>
<dbReference type="Gene3D" id="3.10.50.40">
    <property type="match status" value="1"/>
</dbReference>
<dbReference type="Gene3D" id="3.30.70.1050">
    <property type="entry name" value="Trigger factor ribosome-binding domain"/>
    <property type="match status" value="1"/>
</dbReference>
<dbReference type="Gene3D" id="1.10.3120.10">
    <property type="entry name" value="Trigger factor, C-terminal domain"/>
    <property type="match status" value="1"/>
</dbReference>
<dbReference type="HAMAP" id="MF_00303">
    <property type="entry name" value="Trigger_factor_Tig"/>
    <property type="match status" value="1"/>
</dbReference>
<dbReference type="InterPro" id="IPR046357">
    <property type="entry name" value="PPIase_dom_sf"/>
</dbReference>
<dbReference type="InterPro" id="IPR001179">
    <property type="entry name" value="PPIase_FKBP_dom"/>
</dbReference>
<dbReference type="InterPro" id="IPR005215">
    <property type="entry name" value="Trig_fac"/>
</dbReference>
<dbReference type="InterPro" id="IPR008880">
    <property type="entry name" value="Trigger_fac_C"/>
</dbReference>
<dbReference type="InterPro" id="IPR037041">
    <property type="entry name" value="Trigger_fac_C_sf"/>
</dbReference>
<dbReference type="InterPro" id="IPR008881">
    <property type="entry name" value="Trigger_fac_ribosome-bd_bac"/>
</dbReference>
<dbReference type="InterPro" id="IPR036611">
    <property type="entry name" value="Trigger_fac_ribosome-bd_sf"/>
</dbReference>
<dbReference type="InterPro" id="IPR027304">
    <property type="entry name" value="Trigger_fact/SurA_dom_sf"/>
</dbReference>
<dbReference type="NCBIfam" id="TIGR00115">
    <property type="entry name" value="tig"/>
    <property type="match status" value="1"/>
</dbReference>
<dbReference type="PANTHER" id="PTHR30560">
    <property type="entry name" value="TRIGGER FACTOR CHAPERONE AND PEPTIDYL-PROLYL CIS/TRANS ISOMERASE"/>
    <property type="match status" value="1"/>
</dbReference>
<dbReference type="PANTHER" id="PTHR30560:SF3">
    <property type="entry name" value="TRIGGER FACTOR-LIKE PROTEIN TIG, CHLOROPLASTIC"/>
    <property type="match status" value="1"/>
</dbReference>
<dbReference type="Pfam" id="PF00254">
    <property type="entry name" value="FKBP_C"/>
    <property type="match status" value="1"/>
</dbReference>
<dbReference type="Pfam" id="PF05698">
    <property type="entry name" value="Trigger_C"/>
    <property type="match status" value="1"/>
</dbReference>
<dbReference type="Pfam" id="PF05697">
    <property type="entry name" value="Trigger_N"/>
    <property type="match status" value="1"/>
</dbReference>
<dbReference type="PIRSF" id="PIRSF003095">
    <property type="entry name" value="Trigger_factor"/>
    <property type="match status" value="1"/>
</dbReference>
<dbReference type="SUPFAM" id="SSF54534">
    <property type="entry name" value="FKBP-like"/>
    <property type="match status" value="1"/>
</dbReference>
<dbReference type="SUPFAM" id="SSF109998">
    <property type="entry name" value="Triger factor/SurA peptide-binding domain-like"/>
    <property type="match status" value="1"/>
</dbReference>
<dbReference type="SUPFAM" id="SSF102735">
    <property type="entry name" value="Trigger factor ribosome-binding domain"/>
    <property type="match status" value="1"/>
</dbReference>
<dbReference type="PROSITE" id="PS50059">
    <property type="entry name" value="FKBP_PPIASE"/>
    <property type="match status" value="1"/>
</dbReference>
<reference key="1">
    <citation type="journal article" date="2009" name="J. Bacteriol.">
        <title>Role of conjugative elements in the evolution of the multidrug-resistant pandemic clone Streptococcus pneumoniae Spain23F ST81.</title>
        <authorList>
            <person name="Croucher N.J."/>
            <person name="Walker D."/>
            <person name="Romero P."/>
            <person name="Lennard N."/>
            <person name="Paterson G.K."/>
            <person name="Bason N.C."/>
            <person name="Mitchell A.M."/>
            <person name="Quail M.A."/>
            <person name="Andrew P.W."/>
            <person name="Parkhill J."/>
            <person name="Bentley S.D."/>
            <person name="Mitchell T.J."/>
        </authorList>
    </citation>
    <scope>NUCLEOTIDE SEQUENCE [LARGE SCALE GENOMIC DNA]</scope>
    <source>
        <strain>ATCC 700669 / Spain 23F-1</strain>
    </source>
</reference>
<protein>
    <recommendedName>
        <fullName evidence="1">Trigger factor</fullName>
        <shortName evidence="1">TF</shortName>
        <ecNumber evidence="1">5.2.1.8</ecNumber>
    </recommendedName>
    <alternativeName>
        <fullName evidence="1">PPIase</fullName>
    </alternativeName>
</protein>
<gene>
    <name evidence="1" type="primary">tig</name>
    <name type="ordered locus">SPN23F03760</name>
</gene>
<feature type="chain" id="PRO_1000198179" description="Trigger factor">
    <location>
        <begin position="1"/>
        <end position="427"/>
    </location>
</feature>
<feature type="domain" description="PPIase FKBP-type" evidence="1">
    <location>
        <begin position="163"/>
        <end position="248"/>
    </location>
</feature>
<name>TIG_STRPJ</name>
<organism>
    <name type="scientific">Streptococcus pneumoniae (strain ATCC 700669 / Spain 23F-1)</name>
    <dbReference type="NCBI Taxonomy" id="561276"/>
    <lineage>
        <taxon>Bacteria</taxon>
        <taxon>Bacillati</taxon>
        <taxon>Bacillota</taxon>
        <taxon>Bacilli</taxon>
        <taxon>Lactobacillales</taxon>
        <taxon>Streptococcaceae</taxon>
        <taxon>Streptococcus</taxon>
    </lineage>
</organism>
<accession>B8ZLG8</accession>